<reference key="1">
    <citation type="journal article" date="2004" name="Nat. Genet.">
        <title>Complete sequencing and characterization of 21,243 full-length human cDNAs.</title>
        <authorList>
            <person name="Ota T."/>
            <person name="Suzuki Y."/>
            <person name="Nishikawa T."/>
            <person name="Otsuki T."/>
            <person name="Sugiyama T."/>
            <person name="Irie R."/>
            <person name="Wakamatsu A."/>
            <person name="Hayashi K."/>
            <person name="Sato H."/>
            <person name="Nagai K."/>
            <person name="Kimura K."/>
            <person name="Makita H."/>
            <person name="Sekine M."/>
            <person name="Obayashi M."/>
            <person name="Nishi T."/>
            <person name="Shibahara T."/>
            <person name="Tanaka T."/>
            <person name="Ishii S."/>
            <person name="Yamamoto J."/>
            <person name="Saito K."/>
            <person name="Kawai Y."/>
            <person name="Isono Y."/>
            <person name="Nakamura Y."/>
            <person name="Nagahari K."/>
            <person name="Murakami K."/>
            <person name="Yasuda T."/>
            <person name="Iwayanagi T."/>
            <person name="Wagatsuma M."/>
            <person name="Shiratori A."/>
            <person name="Sudo H."/>
            <person name="Hosoiri T."/>
            <person name="Kaku Y."/>
            <person name="Kodaira H."/>
            <person name="Kondo H."/>
            <person name="Sugawara M."/>
            <person name="Takahashi M."/>
            <person name="Kanda K."/>
            <person name="Yokoi T."/>
            <person name="Furuya T."/>
            <person name="Kikkawa E."/>
            <person name="Omura Y."/>
            <person name="Abe K."/>
            <person name="Kamihara K."/>
            <person name="Katsuta N."/>
            <person name="Sato K."/>
            <person name="Tanikawa M."/>
            <person name="Yamazaki M."/>
            <person name="Ninomiya K."/>
            <person name="Ishibashi T."/>
            <person name="Yamashita H."/>
            <person name="Murakawa K."/>
            <person name="Fujimori K."/>
            <person name="Tanai H."/>
            <person name="Kimata M."/>
            <person name="Watanabe M."/>
            <person name="Hiraoka S."/>
            <person name="Chiba Y."/>
            <person name="Ishida S."/>
            <person name="Ono Y."/>
            <person name="Takiguchi S."/>
            <person name="Watanabe S."/>
            <person name="Yosida M."/>
            <person name="Hotuta T."/>
            <person name="Kusano J."/>
            <person name="Kanehori K."/>
            <person name="Takahashi-Fujii A."/>
            <person name="Hara H."/>
            <person name="Tanase T.-O."/>
            <person name="Nomura Y."/>
            <person name="Togiya S."/>
            <person name="Komai F."/>
            <person name="Hara R."/>
            <person name="Takeuchi K."/>
            <person name="Arita M."/>
            <person name="Imose N."/>
            <person name="Musashino K."/>
            <person name="Yuuki H."/>
            <person name="Oshima A."/>
            <person name="Sasaki N."/>
            <person name="Aotsuka S."/>
            <person name="Yoshikawa Y."/>
            <person name="Matsunawa H."/>
            <person name="Ichihara T."/>
            <person name="Shiohata N."/>
            <person name="Sano S."/>
            <person name="Moriya S."/>
            <person name="Momiyama H."/>
            <person name="Satoh N."/>
            <person name="Takami S."/>
            <person name="Terashima Y."/>
            <person name="Suzuki O."/>
            <person name="Nakagawa S."/>
            <person name="Senoh A."/>
            <person name="Mizoguchi H."/>
            <person name="Goto Y."/>
            <person name="Shimizu F."/>
            <person name="Wakebe H."/>
            <person name="Hishigaki H."/>
            <person name="Watanabe T."/>
            <person name="Sugiyama A."/>
            <person name="Takemoto M."/>
            <person name="Kawakami B."/>
            <person name="Yamazaki M."/>
            <person name="Watanabe K."/>
            <person name="Kumagai A."/>
            <person name="Itakura S."/>
            <person name="Fukuzumi Y."/>
            <person name="Fujimori Y."/>
            <person name="Komiyama M."/>
            <person name="Tashiro H."/>
            <person name="Tanigami A."/>
            <person name="Fujiwara T."/>
            <person name="Ono T."/>
            <person name="Yamada K."/>
            <person name="Fujii Y."/>
            <person name="Ozaki K."/>
            <person name="Hirao M."/>
            <person name="Ohmori Y."/>
            <person name="Kawabata A."/>
            <person name="Hikiji T."/>
            <person name="Kobatake N."/>
            <person name="Inagaki H."/>
            <person name="Ikema Y."/>
            <person name="Okamoto S."/>
            <person name="Okitani R."/>
            <person name="Kawakami T."/>
            <person name="Noguchi S."/>
            <person name="Itoh T."/>
            <person name="Shigeta K."/>
            <person name="Senba T."/>
            <person name="Matsumura K."/>
            <person name="Nakajima Y."/>
            <person name="Mizuno T."/>
            <person name="Morinaga M."/>
            <person name="Sasaki M."/>
            <person name="Togashi T."/>
            <person name="Oyama M."/>
            <person name="Hata H."/>
            <person name="Watanabe M."/>
            <person name="Komatsu T."/>
            <person name="Mizushima-Sugano J."/>
            <person name="Satoh T."/>
            <person name="Shirai Y."/>
            <person name="Takahashi Y."/>
            <person name="Nakagawa K."/>
            <person name="Okumura K."/>
            <person name="Nagase T."/>
            <person name="Nomura N."/>
            <person name="Kikuchi H."/>
            <person name="Masuho Y."/>
            <person name="Yamashita R."/>
            <person name="Nakai K."/>
            <person name="Yada T."/>
            <person name="Nakamura Y."/>
            <person name="Ohara O."/>
            <person name="Isogai T."/>
            <person name="Sugano S."/>
        </authorList>
    </citation>
    <scope>NUCLEOTIDE SEQUENCE [LARGE SCALE MRNA]</scope>
    <source>
        <tissue>Thymus</tissue>
    </source>
</reference>
<feature type="chain" id="PRO_0000340714" description="Putative uncharacterized protein FLJ42213">
    <location>
        <begin position="1"/>
        <end position="151"/>
    </location>
</feature>
<name>YS045_HUMAN</name>
<protein>
    <recommendedName>
        <fullName>Putative uncharacterized protein FLJ42213</fullName>
    </recommendedName>
</protein>
<proteinExistence type="evidence at transcript level"/>
<sequence>MHAGKRSPLTQSISCVCLPELGALWEIESARVNLRVSGREASREMESSPRPHRIAGVKRFLKHAGKWSLRWFLSPRWILQFRRWARKWSRFTRSSFQVRWAAVPAGKCSQHQGLSAVATASPGVFWEMEFDVSSPLTEGAGSPMSSKHAGE</sequence>
<accession>Q6ZVQ6</accession>
<dbReference type="EMBL" id="AK124207">
    <property type="protein sequence ID" value="BAC85805.1"/>
    <property type="molecule type" value="mRNA"/>
</dbReference>
<dbReference type="SMR" id="Q6ZVQ6"/>
<dbReference type="BioMuta" id="-"/>
<dbReference type="neXtProt" id="NX_Q6ZVQ6"/>
<dbReference type="InParanoid" id="Q6ZVQ6"/>
<dbReference type="PAN-GO" id="Q6ZVQ6">
    <property type="GO annotations" value="0 GO annotations based on evolutionary models"/>
</dbReference>
<dbReference type="PhylomeDB" id="Q6ZVQ6"/>
<dbReference type="Pharos" id="Q6ZVQ6">
    <property type="development level" value="Tdark"/>
</dbReference>
<dbReference type="Proteomes" id="UP000005640">
    <property type="component" value="Unplaced"/>
</dbReference>
<dbReference type="RNAct" id="Q6ZVQ6">
    <property type="molecule type" value="protein"/>
</dbReference>
<keyword id="KW-1185">Reference proteome</keyword>
<organism>
    <name type="scientific">Homo sapiens</name>
    <name type="common">Human</name>
    <dbReference type="NCBI Taxonomy" id="9606"/>
    <lineage>
        <taxon>Eukaryota</taxon>
        <taxon>Metazoa</taxon>
        <taxon>Chordata</taxon>
        <taxon>Craniata</taxon>
        <taxon>Vertebrata</taxon>
        <taxon>Euteleostomi</taxon>
        <taxon>Mammalia</taxon>
        <taxon>Eutheria</taxon>
        <taxon>Euarchontoglires</taxon>
        <taxon>Primates</taxon>
        <taxon>Haplorrhini</taxon>
        <taxon>Catarrhini</taxon>
        <taxon>Hominidae</taxon>
        <taxon>Homo</taxon>
    </lineage>
</organism>